<dbReference type="EMBL" id="CP000891">
    <property type="protein sequence ID" value="ABX48553.1"/>
    <property type="molecule type" value="Genomic_DNA"/>
</dbReference>
<dbReference type="RefSeq" id="WP_006080881.1">
    <property type="nucleotide sequence ID" value="NC_009997.1"/>
</dbReference>
<dbReference type="SMR" id="A9KTL2"/>
<dbReference type="GeneID" id="11771635"/>
<dbReference type="KEGG" id="sbn:Sbal195_1379"/>
<dbReference type="HOGENOM" id="CLU_057217_6_0_6"/>
<dbReference type="Proteomes" id="UP000000770">
    <property type="component" value="Chromosome"/>
</dbReference>
<dbReference type="GO" id="GO:0005829">
    <property type="term" value="C:cytosol"/>
    <property type="evidence" value="ECO:0007669"/>
    <property type="project" value="TreeGrafter"/>
</dbReference>
<dbReference type="GO" id="GO:0000774">
    <property type="term" value="F:adenyl-nucleotide exchange factor activity"/>
    <property type="evidence" value="ECO:0007669"/>
    <property type="project" value="InterPro"/>
</dbReference>
<dbReference type="GO" id="GO:0042803">
    <property type="term" value="F:protein homodimerization activity"/>
    <property type="evidence" value="ECO:0007669"/>
    <property type="project" value="InterPro"/>
</dbReference>
<dbReference type="GO" id="GO:0051087">
    <property type="term" value="F:protein-folding chaperone binding"/>
    <property type="evidence" value="ECO:0007669"/>
    <property type="project" value="InterPro"/>
</dbReference>
<dbReference type="GO" id="GO:0051082">
    <property type="term" value="F:unfolded protein binding"/>
    <property type="evidence" value="ECO:0007669"/>
    <property type="project" value="TreeGrafter"/>
</dbReference>
<dbReference type="GO" id="GO:0006457">
    <property type="term" value="P:protein folding"/>
    <property type="evidence" value="ECO:0007669"/>
    <property type="project" value="InterPro"/>
</dbReference>
<dbReference type="CDD" id="cd00446">
    <property type="entry name" value="GrpE"/>
    <property type="match status" value="1"/>
</dbReference>
<dbReference type="FunFam" id="2.30.22.10:FF:000001">
    <property type="entry name" value="Protein GrpE"/>
    <property type="match status" value="1"/>
</dbReference>
<dbReference type="Gene3D" id="3.90.20.20">
    <property type="match status" value="1"/>
</dbReference>
<dbReference type="Gene3D" id="2.30.22.10">
    <property type="entry name" value="Head domain of nucleotide exchange factor GrpE"/>
    <property type="match status" value="1"/>
</dbReference>
<dbReference type="HAMAP" id="MF_01151">
    <property type="entry name" value="GrpE"/>
    <property type="match status" value="1"/>
</dbReference>
<dbReference type="InterPro" id="IPR000740">
    <property type="entry name" value="GrpE"/>
</dbReference>
<dbReference type="InterPro" id="IPR013805">
    <property type="entry name" value="GrpE_coiled_coil"/>
</dbReference>
<dbReference type="InterPro" id="IPR009012">
    <property type="entry name" value="GrpE_head"/>
</dbReference>
<dbReference type="NCBIfam" id="NF010737">
    <property type="entry name" value="PRK14139.1"/>
    <property type="match status" value="1"/>
</dbReference>
<dbReference type="NCBIfam" id="NF010738">
    <property type="entry name" value="PRK14140.1"/>
    <property type="match status" value="1"/>
</dbReference>
<dbReference type="NCBIfam" id="NF010748">
    <property type="entry name" value="PRK14150.1"/>
    <property type="match status" value="1"/>
</dbReference>
<dbReference type="PANTHER" id="PTHR21237">
    <property type="entry name" value="GRPE PROTEIN"/>
    <property type="match status" value="1"/>
</dbReference>
<dbReference type="PANTHER" id="PTHR21237:SF23">
    <property type="entry name" value="GRPE PROTEIN HOMOLOG, MITOCHONDRIAL"/>
    <property type="match status" value="1"/>
</dbReference>
<dbReference type="Pfam" id="PF01025">
    <property type="entry name" value="GrpE"/>
    <property type="match status" value="1"/>
</dbReference>
<dbReference type="PRINTS" id="PR00773">
    <property type="entry name" value="GRPEPROTEIN"/>
</dbReference>
<dbReference type="SUPFAM" id="SSF58014">
    <property type="entry name" value="Coiled-coil domain of nucleotide exchange factor GrpE"/>
    <property type="match status" value="1"/>
</dbReference>
<dbReference type="SUPFAM" id="SSF51064">
    <property type="entry name" value="Head domain of nucleotide exchange factor GrpE"/>
    <property type="match status" value="1"/>
</dbReference>
<dbReference type="PROSITE" id="PS01071">
    <property type="entry name" value="GRPE"/>
    <property type="match status" value="1"/>
</dbReference>
<gene>
    <name evidence="1" type="primary">grpE</name>
    <name type="ordered locus">Sbal195_1379</name>
</gene>
<accession>A9KTL2</accession>
<feature type="chain" id="PRO_1000137618" description="Protein GrpE">
    <location>
        <begin position="1"/>
        <end position="206"/>
    </location>
</feature>
<keyword id="KW-0143">Chaperone</keyword>
<keyword id="KW-0963">Cytoplasm</keyword>
<keyword id="KW-0346">Stress response</keyword>
<protein>
    <recommendedName>
        <fullName evidence="1">Protein GrpE</fullName>
    </recommendedName>
    <alternativeName>
        <fullName evidence="1">HSP-70 cofactor</fullName>
    </alternativeName>
</protein>
<reference key="1">
    <citation type="submission" date="2007-11" db="EMBL/GenBank/DDBJ databases">
        <title>Complete sequence of chromosome of Shewanella baltica OS195.</title>
        <authorList>
            <consortium name="US DOE Joint Genome Institute"/>
            <person name="Copeland A."/>
            <person name="Lucas S."/>
            <person name="Lapidus A."/>
            <person name="Barry K."/>
            <person name="Glavina del Rio T."/>
            <person name="Dalin E."/>
            <person name="Tice H."/>
            <person name="Pitluck S."/>
            <person name="Chain P."/>
            <person name="Malfatti S."/>
            <person name="Shin M."/>
            <person name="Vergez L."/>
            <person name="Schmutz J."/>
            <person name="Larimer F."/>
            <person name="Land M."/>
            <person name="Hauser L."/>
            <person name="Kyrpides N."/>
            <person name="Kim E."/>
            <person name="Brettar I."/>
            <person name="Rodrigues J."/>
            <person name="Konstantinidis K."/>
            <person name="Klappenbach J."/>
            <person name="Hofle M."/>
            <person name="Tiedje J."/>
            <person name="Richardson P."/>
        </authorList>
    </citation>
    <scope>NUCLEOTIDE SEQUENCE [LARGE SCALE GENOMIC DNA]</scope>
    <source>
        <strain>OS195</strain>
    </source>
</reference>
<proteinExistence type="inferred from homology"/>
<organism>
    <name type="scientific">Shewanella baltica (strain OS195)</name>
    <dbReference type="NCBI Taxonomy" id="399599"/>
    <lineage>
        <taxon>Bacteria</taxon>
        <taxon>Pseudomonadati</taxon>
        <taxon>Pseudomonadota</taxon>
        <taxon>Gammaproteobacteria</taxon>
        <taxon>Alteromonadales</taxon>
        <taxon>Shewanellaceae</taxon>
        <taxon>Shewanella</taxon>
    </lineage>
</organism>
<name>GRPE_SHEB9</name>
<sequence length="206" mass="22680">MSNESIKAEQDLIQEGVESEVSTAEASLIDELTQANFRIEELEQLLAEALAKVEEQKDSVIRAAAEVDNIRRRAAMDVEKANKFALEKFANELLPVLDNMERALMGTNPEDEATKSIYQGVELTQKSLLTAVAKFGVKQIDPQGQSFNPDQHQAIGMQPSAEFPANTVMLVMQKGYELNSRLLRPAMVMVSQGGPNQESATIDIEA</sequence>
<comment type="function">
    <text evidence="1">Participates actively in the response to hyperosmotic and heat shock by preventing the aggregation of stress-denatured proteins, in association with DnaK and GrpE. It is the nucleotide exchange factor for DnaK and may function as a thermosensor. Unfolded proteins bind initially to DnaJ; upon interaction with the DnaJ-bound protein, DnaK hydrolyzes its bound ATP, resulting in the formation of a stable complex. GrpE releases ADP from DnaK; ATP binding to DnaK triggers the release of the substrate protein, thus completing the reaction cycle. Several rounds of ATP-dependent interactions between DnaJ, DnaK and GrpE are required for fully efficient folding.</text>
</comment>
<comment type="subunit">
    <text evidence="1">Homodimer.</text>
</comment>
<comment type="subcellular location">
    <subcellularLocation>
        <location evidence="1">Cytoplasm</location>
    </subcellularLocation>
</comment>
<comment type="similarity">
    <text evidence="1">Belongs to the GrpE family.</text>
</comment>
<evidence type="ECO:0000255" key="1">
    <source>
        <dbReference type="HAMAP-Rule" id="MF_01151"/>
    </source>
</evidence>